<proteinExistence type="inferred from homology"/>
<reference key="1">
    <citation type="journal article" date="2002" name="Mol. Microbiol.">
        <title>Genome sequence of Streptococcus agalactiae, a pathogen causing invasive neonatal disease.</title>
        <authorList>
            <person name="Glaser P."/>
            <person name="Rusniok C."/>
            <person name="Buchrieser C."/>
            <person name="Chevalier F."/>
            <person name="Frangeul L."/>
            <person name="Msadek T."/>
            <person name="Zouine M."/>
            <person name="Couve E."/>
            <person name="Lalioui L."/>
            <person name="Poyart C."/>
            <person name="Trieu-Cuot P."/>
            <person name="Kunst F."/>
        </authorList>
    </citation>
    <scope>NUCLEOTIDE SEQUENCE [LARGE SCALE GENOMIC DNA]</scope>
    <source>
        <strain>NEM316</strain>
    </source>
</reference>
<name>RS14Z_STRA3</name>
<organism>
    <name type="scientific">Streptococcus agalactiae serotype III (strain NEM316)</name>
    <dbReference type="NCBI Taxonomy" id="211110"/>
    <lineage>
        <taxon>Bacteria</taxon>
        <taxon>Bacillati</taxon>
        <taxon>Bacillota</taxon>
        <taxon>Bacilli</taxon>
        <taxon>Lactobacillales</taxon>
        <taxon>Streptococcaceae</taxon>
        <taxon>Streptococcus</taxon>
    </lineage>
</organism>
<gene>
    <name evidence="1" type="primary">rpsZ</name>
    <name evidence="1" type="synonym">rpsN1</name>
    <name type="ordered locus">gbs0071</name>
</gene>
<sequence>MAKKSMIAKNKRPAKFSTQAYTRCEKCGRPHSVYRKFQLCRVCFRDLAYKGQVPGVTKASW</sequence>
<dbReference type="EMBL" id="AL766843">
    <property type="protein sequence ID" value="CAD45716.1"/>
    <property type="molecule type" value="Genomic_DNA"/>
</dbReference>
<dbReference type="RefSeq" id="WP_001085698.1">
    <property type="nucleotide sequence ID" value="NC_004368.1"/>
</dbReference>
<dbReference type="SMR" id="Q8E7S8"/>
<dbReference type="KEGG" id="san:gbs0071"/>
<dbReference type="eggNOG" id="COG0199">
    <property type="taxonomic scope" value="Bacteria"/>
</dbReference>
<dbReference type="HOGENOM" id="CLU_139869_3_0_9"/>
<dbReference type="Proteomes" id="UP000000823">
    <property type="component" value="Chromosome"/>
</dbReference>
<dbReference type="GO" id="GO:0015935">
    <property type="term" value="C:small ribosomal subunit"/>
    <property type="evidence" value="ECO:0007669"/>
    <property type="project" value="TreeGrafter"/>
</dbReference>
<dbReference type="GO" id="GO:0019843">
    <property type="term" value="F:rRNA binding"/>
    <property type="evidence" value="ECO:0007669"/>
    <property type="project" value="UniProtKB-UniRule"/>
</dbReference>
<dbReference type="GO" id="GO:0003735">
    <property type="term" value="F:structural constituent of ribosome"/>
    <property type="evidence" value="ECO:0007669"/>
    <property type="project" value="InterPro"/>
</dbReference>
<dbReference type="GO" id="GO:0008270">
    <property type="term" value="F:zinc ion binding"/>
    <property type="evidence" value="ECO:0007669"/>
    <property type="project" value="UniProtKB-UniRule"/>
</dbReference>
<dbReference type="GO" id="GO:0006412">
    <property type="term" value="P:translation"/>
    <property type="evidence" value="ECO:0007669"/>
    <property type="project" value="UniProtKB-UniRule"/>
</dbReference>
<dbReference type="FunFam" id="4.10.830.10:FF:000001">
    <property type="entry name" value="30S ribosomal protein S14 type Z"/>
    <property type="match status" value="1"/>
</dbReference>
<dbReference type="Gene3D" id="4.10.830.10">
    <property type="entry name" value="30s Ribosomal Protein S14, Chain N"/>
    <property type="match status" value="1"/>
</dbReference>
<dbReference type="HAMAP" id="MF_01364_B">
    <property type="entry name" value="Ribosomal_uS14_2_B"/>
    <property type="match status" value="1"/>
</dbReference>
<dbReference type="InterPro" id="IPR001209">
    <property type="entry name" value="Ribosomal_uS14"/>
</dbReference>
<dbReference type="InterPro" id="IPR023053">
    <property type="entry name" value="Ribosomal_uS14_bact"/>
</dbReference>
<dbReference type="InterPro" id="IPR018271">
    <property type="entry name" value="Ribosomal_uS14_CS"/>
</dbReference>
<dbReference type="InterPro" id="IPR043140">
    <property type="entry name" value="Ribosomal_uS14_sf"/>
</dbReference>
<dbReference type="NCBIfam" id="NF005974">
    <property type="entry name" value="PRK08061.1"/>
    <property type="match status" value="1"/>
</dbReference>
<dbReference type="PANTHER" id="PTHR19836">
    <property type="entry name" value="30S RIBOSOMAL PROTEIN S14"/>
    <property type="match status" value="1"/>
</dbReference>
<dbReference type="PANTHER" id="PTHR19836:SF26">
    <property type="entry name" value="SMALL RIBOSOMAL SUBUNIT PROTEIN US14B"/>
    <property type="match status" value="1"/>
</dbReference>
<dbReference type="Pfam" id="PF00253">
    <property type="entry name" value="Ribosomal_S14"/>
    <property type="match status" value="1"/>
</dbReference>
<dbReference type="SUPFAM" id="SSF57716">
    <property type="entry name" value="Glucocorticoid receptor-like (DNA-binding domain)"/>
    <property type="match status" value="1"/>
</dbReference>
<dbReference type="PROSITE" id="PS00527">
    <property type="entry name" value="RIBOSOMAL_S14"/>
    <property type="match status" value="1"/>
</dbReference>
<comment type="function">
    <text evidence="1">Binds 16S rRNA, required for the assembly of 30S particles and may also be responsible for determining the conformation of the 16S rRNA at the A site.</text>
</comment>
<comment type="cofactor">
    <cofactor evidence="1">
        <name>Zn(2+)</name>
        <dbReference type="ChEBI" id="CHEBI:29105"/>
    </cofactor>
    <text evidence="1">Binds 1 zinc ion per subunit.</text>
</comment>
<comment type="subunit">
    <text evidence="1">Part of the 30S ribosomal subunit. Contacts proteins S3 and S10.</text>
</comment>
<comment type="similarity">
    <text evidence="1">Belongs to the universal ribosomal protein uS14 family. Zinc-binding uS14 subfamily.</text>
</comment>
<protein>
    <recommendedName>
        <fullName evidence="1">Small ribosomal subunit protein uS14B</fullName>
    </recommendedName>
    <alternativeName>
        <fullName evidence="2">30S ribosomal protein S14 type Z</fullName>
    </alternativeName>
</protein>
<evidence type="ECO:0000255" key="1">
    <source>
        <dbReference type="HAMAP-Rule" id="MF_01364"/>
    </source>
</evidence>
<evidence type="ECO:0000305" key="2"/>
<keyword id="KW-0479">Metal-binding</keyword>
<keyword id="KW-0687">Ribonucleoprotein</keyword>
<keyword id="KW-0689">Ribosomal protein</keyword>
<keyword id="KW-0694">RNA-binding</keyword>
<keyword id="KW-0699">rRNA-binding</keyword>
<keyword id="KW-0862">Zinc</keyword>
<accession>Q8E7S8</accession>
<feature type="chain" id="PRO_0000269142" description="Small ribosomal subunit protein uS14B">
    <location>
        <begin position="1"/>
        <end position="61"/>
    </location>
</feature>
<feature type="binding site" evidence="1">
    <location>
        <position position="24"/>
    </location>
    <ligand>
        <name>Zn(2+)</name>
        <dbReference type="ChEBI" id="CHEBI:29105"/>
    </ligand>
</feature>
<feature type="binding site" evidence="1">
    <location>
        <position position="27"/>
    </location>
    <ligand>
        <name>Zn(2+)</name>
        <dbReference type="ChEBI" id="CHEBI:29105"/>
    </ligand>
</feature>
<feature type="binding site" evidence="1">
    <location>
        <position position="40"/>
    </location>
    <ligand>
        <name>Zn(2+)</name>
        <dbReference type="ChEBI" id="CHEBI:29105"/>
    </ligand>
</feature>
<feature type="binding site" evidence="1">
    <location>
        <position position="43"/>
    </location>
    <ligand>
        <name>Zn(2+)</name>
        <dbReference type="ChEBI" id="CHEBI:29105"/>
    </ligand>
</feature>